<keyword id="KW-0521">NADP</keyword>
<keyword id="KW-0547">Nucleotide-binding</keyword>
<keyword id="KW-0560">Oxidoreductase</keyword>
<keyword id="KW-1185">Reference proteome</keyword>
<dbReference type="EC" id="1.-.-.-" evidence="9"/>
<dbReference type="EMBL" id="CM001232">
    <property type="protein sequence ID" value="EHA55871.1"/>
    <property type="molecule type" value="Genomic_DNA"/>
</dbReference>
<dbReference type="RefSeq" id="XP_003715678.1">
    <property type="nucleotide sequence ID" value="XM_003715630.1"/>
</dbReference>
<dbReference type="SMR" id="G4MWB1"/>
<dbReference type="FunCoup" id="G4MWB1">
    <property type="interactions" value="224"/>
</dbReference>
<dbReference type="EnsemblFungi" id="MGG_08380T0">
    <property type="protein sequence ID" value="MGG_08380T0"/>
    <property type="gene ID" value="MGG_08380"/>
</dbReference>
<dbReference type="GeneID" id="2678568"/>
<dbReference type="KEGG" id="mgr:MGG_08380"/>
<dbReference type="VEuPathDB" id="FungiDB:MGG_08380"/>
<dbReference type="eggNOG" id="KOG1198">
    <property type="taxonomic scope" value="Eukaryota"/>
</dbReference>
<dbReference type="HOGENOM" id="CLU_026673_16_1_1"/>
<dbReference type="InParanoid" id="G4MWB1"/>
<dbReference type="OMA" id="DYKMHER"/>
<dbReference type="OrthoDB" id="48317at2759"/>
<dbReference type="Proteomes" id="UP000009058">
    <property type="component" value="Chromosome 2"/>
</dbReference>
<dbReference type="GO" id="GO:0000166">
    <property type="term" value="F:nucleotide binding"/>
    <property type="evidence" value="ECO:0007669"/>
    <property type="project" value="UniProtKB-KW"/>
</dbReference>
<dbReference type="GO" id="GO:0016651">
    <property type="term" value="F:oxidoreductase activity, acting on NAD(P)H"/>
    <property type="evidence" value="ECO:0007669"/>
    <property type="project" value="InterPro"/>
</dbReference>
<dbReference type="CDD" id="cd08249">
    <property type="entry name" value="enoyl_reductase_like"/>
    <property type="match status" value="1"/>
</dbReference>
<dbReference type="Gene3D" id="3.90.180.10">
    <property type="entry name" value="Medium-chain alcohol dehydrogenases, catalytic domain"/>
    <property type="match status" value="1"/>
</dbReference>
<dbReference type="Gene3D" id="3.40.50.720">
    <property type="entry name" value="NAD(P)-binding Rossmann-like Domain"/>
    <property type="match status" value="1"/>
</dbReference>
<dbReference type="InterPro" id="IPR013149">
    <property type="entry name" value="ADH-like_C"/>
</dbReference>
<dbReference type="InterPro" id="IPR013154">
    <property type="entry name" value="ADH-like_N"/>
</dbReference>
<dbReference type="InterPro" id="IPR011032">
    <property type="entry name" value="GroES-like_sf"/>
</dbReference>
<dbReference type="InterPro" id="IPR036291">
    <property type="entry name" value="NAD(P)-bd_dom_sf"/>
</dbReference>
<dbReference type="InterPro" id="IPR020843">
    <property type="entry name" value="PKS_ER"/>
</dbReference>
<dbReference type="InterPro" id="IPR047122">
    <property type="entry name" value="Trans-enoyl_RdTase-like"/>
</dbReference>
<dbReference type="PANTHER" id="PTHR45348">
    <property type="entry name" value="HYPOTHETICAL OXIDOREDUCTASE (EUROFUNG)"/>
    <property type="match status" value="1"/>
</dbReference>
<dbReference type="PANTHER" id="PTHR45348:SF1">
    <property type="entry name" value="TRANS-ENOYL REDUCTASE STHE"/>
    <property type="match status" value="1"/>
</dbReference>
<dbReference type="Pfam" id="PF08240">
    <property type="entry name" value="ADH_N"/>
    <property type="match status" value="1"/>
</dbReference>
<dbReference type="Pfam" id="PF00107">
    <property type="entry name" value="ADH_zinc_N"/>
    <property type="match status" value="1"/>
</dbReference>
<dbReference type="SMART" id="SM00829">
    <property type="entry name" value="PKS_ER"/>
    <property type="match status" value="1"/>
</dbReference>
<dbReference type="SUPFAM" id="SSF50129">
    <property type="entry name" value="GroES-like"/>
    <property type="match status" value="1"/>
</dbReference>
<dbReference type="SUPFAM" id="SSF51735">
    <property type="entry name" value="NAD(P)-binding Rossmann-fold domains"/>
    <property type="match status" value="1"/>
</dbReference>
<sequence>MYIPSARTAIVQDDKGGLKIDRNAPMPQPRPNELLVQVKAVAINPCDHKMYERFPTPGAVDGCDFAGIVVQLGSDVKTFQIGDRVCGAVHGSNPSRPESGTFAEYTVSDGEFTLKLPPNLSFREAMGLGTTGLSTIGMAIYKGLMLPGSPLEPAEKPRTVLVHGASSSVGTMALQLIRLMGHIPIATCSPRNFELVKKYGAEEVFDYNDPECGQQIKQYTGNTLAYIIDPFTDVKSVALCYEAMGRAGGRYACLEMYPEFALERRSIKVFFALGMALLGHSLDLAYGYERDEDPEMRSFGIGWYKVLQELLYQGKLRPHPLRELEGGFEGILKGVQMVKNKEVSGQKLVVSLE</sequence>
<protein>
    <recommendedName>
        <fullName evidence="6">Trans-enoyl reductase RAP2</fullName>
        <ecNumber evidence="9">1.-.-.-</ecNumber>
    </recommendedName>
    <alternativeName>
        <fullName evidence="7">ACE1 cytochalasan biosynthesis cluster protein RAP2</fullName>
    </alternativeName>
</protein>
<name>RAP2_PYRO7</name>
<accession>G4MWB1</accession>
<reference key="1">
    <citation type="journal article" date="2005" name="Nature">
        <title>The genome sequence of the rice blast fungus Magnaporthe grisea.</title>
        <authorList>
            <person name="Dean R.A."/>
            <person name="Talbot N.J."/>
            <person name="Ebbole D.J."/>
            <person name="Farman M.L."/>
            <person name="Mitchell T.K."/>
            <person name="Orbach M.J."/>
            <person name="Thon M.R."/>
            <person name="Kulkarni R."/>
            <person name="Xu J.-R."/>
            <person name="Pan H."/>
            <person name="Read N.D."/>
            <person name="Lee Y.-H."/>
            <person name="Carbone I."/>
            <person name="Brown D."/>
            <person name="Oh Y.Y."/>
            <person name="Donofrio N."/>
            <person name="Jeong J.S."/>
            <person name="Soanes D.M."/>
            <person name="Djonovic S."/>
            <person name="Kolomiets E."/>
            <person name="Rehmeyer C."/>
            <person name="Li W."/>
            <person name="Harding M."/>
            <person name="Kim S."/>
            <person name="Lebrun M.-H."/>
            <person name="Bohnert H."/>
            <person name="Coughlan S."/>
            <person name="Butler J."/>
            <person name="Calvo S.E."/>
            <person name="Ma L.-J."/>
            <person name="Nicol R."/>
            <person name="Purcell S."/>
            <person name="Nusbaum C."/>
            <person name="Galagan J.E."/>
            <person name="Birren B.W."/>
        </authorList>
    </citation>
    <scope>NUCLEOTIDE SEQUENCE [LARGE SCALE GENOMIC DNA]</scope>
    <source>
        <strain>70-15 / ATCC MYA-4617 / FGSC 8958</strain>
    </source>
</reference>
<reference key="2">
    <citation type="journal article" date="2008" name="New Phytol.">
        <title>Magnaporthe grisea avirulence gene ACE1 belongs to an infection-specific gene cluster involved in secondary metabolism.</title>
        <authorList>
            <person name="Collemare J."/>
            <person name="Pianfetti M."/>
            <person name="Houlle A.E."/>
            <person name="Morin D."/>
            <person name="Camborde L."/>
            <person name="Gagey M.J."/>
            <person name="Barbisan C."/>
            <person name="Fudal I."/>
            <person name="Lebrun M.H."/>
            <person name="Boehnert H.U."/>
        </authorList>
    </citation>
    <scope>FUNCTION</scope>
    <scope>INDUCTION</scope>
    <scope>DISRUPTION PHENOTYPE</scope>
</reference>
<reference key="3">
    <citation type="journal article" date="2015" name="Chem. Sci.">
        <title>Heterologous expression of the avirulence gene ACE1 from the fungal rice pathogen Magnaporthe oryzae.</title>
        <authorList>
            <person name="Song Z."/>
            <person name="Bakeer W."/>
            <person name="Marshall J.W."/>
            <person name="Yakasai A.A."/>
            <person name="Khalid R.M."/>
            <person name="Collemare J."/>
            <person name="Skellam E."/>
            <person name="Tharreau D."/>
            <person name="Lebrun M.H."/>
            <person name="Lazarus C.M."/>
            <person name="Bailey A.M."/>
            <person name="Simpson T.J."/>
            <person name="Cox R.J."/>
        </authorList>
    </citation>
    <scope>FUNCTION</scope>
</reference>
<reference key="4">
    <citation type="journal article" date="2019" name="Org. Lett.">
        <title>Investigating the function of cryptic cytochalasan cytochrome P450 monooxygenases using combinatorial biosynthesis.</title>
        <authorList>
            <person name="Wang C."/>
            <person name="Becker K."/>
            <person name="Pfuetze S."/>
            <person name="Kuhnert E."/>
            <person name="Stadler M."/>
            <person name="Cox R.J."/>
            <person name="Skellam E."/>
        </authorList>
    </citation>
    <scope>FUNCTION</scope>
</reference>
<comment type="function">
    <text evidence="3 4 5 9 10">Trans-enoyl reductase; part of the gene cluster that mediates the biosynthesis of a tyrosine-derived cytochalasan acting as a fungal signal recognized by resistant rice plants and leads to avirulence in Pi33 resistant rice cultivars (PubMed:18433432). The first step in the pathway is catalyzed by the hybrid PKS-NRPS ACE1, assisted by the enoyl reductase RAP1, that are responsible for fusion of the tyrosine precursor and the polyketide backbone (PubMed:29142718). The polyketide synthase module (PKS) of ACE1 is responsible for the synthesis of the polyketide backbone and the downstream nonribosomal peptide synthetase (NRPS) amidates the carboxyl end of the polyketide with the tyrosine precursor (PubMed:29142718). Because ACE1 lacks a designated enoylreductase (ER) domain, the required activity is provided the enoyl reductase RAP1 (PubMed:29142718). Reduction by the hydrolyase ORFZ, followed by dehydration and intra-molecular Diels-Alder cyclization by the Diels-Alderase ORF3 then yield the required isoindolone-fused macrocycle (Probable). A number of oxidative steps catalyzed by the tailoring enzymes identified within the cluster, including cytochrome P450 monooxygenases CYP1 to CYP4, the FAD-linked oxidoreductase OXR2 and the short-chain dehydrogenase/reductase OXR1, are further required to afford the final cytochalasans that confer avirulence and which have still to be identified (Probable). The monooxygenase CYP1 has been shown to be a site-selective C-18 hydroxylase whereas the function of CYP3 is the site-selective epoxidation of the C-6/C-7 olefin that is present in some intermediate compounds (PubMed:31644300). Finally, SYN2 and RAP2 are not required for avirulence in Pi33 resistant rice cultivars (PubMed:18433432).</text>
</comment>
<comment type="pathway">
    <text evidence="9">Secondary metabolite biosynthesis.</text>
</comment>
<comment type="subunit">
    <text evidence="1">Monomer.</text>
</comment>
<comment type="induction">
    <text evidence="3">Expressed exclusively during fungal penetration of host leaves, the time point at which plant defense reactions are triggered.</text>
</comment>
<comment type="disruption phenotype">
    <text evidence="3">Does not impeair avirulence in Pi33 resistant rice cultivars.</text>
</comment>
<comment type="similarity">
    <text evidence="8">Belongs to the zinc-containing alcohol dehydrogenase family.</text>
</comment>
<organism>
    <name type="scientific">Pyricularia oryzae (strain 70-15 / ATCC MYA-4617 / FGSC 8958)</name>
    <name type="common">Rice blast fungus</name>
    <name type="synonym">Magnaporthe oryzae</name>
    <dbReference type="NCBI Taxonomy" id="242507"/>
    <lineage>
        <taxon>Eukaryota</taxon>
        <taxon>Fungi</taxon>
        <taxon>Dikarya</taxon>
        <taxon>Ascomycota</taxon>
        <taxon>Pezizomycotina</taxon>
        <taxon>Sordariomycetes</taxon>
        <taxon>Sordariomycetidae</taxon>
        <taxon>Magnaporthales</taxon>
        <taxon>Pyriculariaceae</taxon>
        <taxon>Pyricularia</taxon>
    </lineage>
</organism>
<gene>
    <name evidence="6" type="primary">RAP2</name>
    <name type="ORF">MGG_08380</name>
</gene>
<feature type="chain" id="PRO_0000449430" description="Trans-enoyl reductase RAP2">
    <location>
        <begin position="1"/>
        <end position="353"/>
    </location>
</feature>
<feature type="binding site" evidence="1">
    <location>
        <begin position="46"/>
        <end position="49"/>
    </location>
    <ligand>
        <name>NADP(+)</name>
        <dbReference type="ChEBI" id="CHEBI:58349"/>
    </ligand>
</feature>
<feature type="binding site" evidence="2">
    <location>
        <begin position="131"/>
        <end position="138"/>
    </location>
    <ligand>
        <name>substrate</name>
    </ligand>
</feature>
<feature type="binding site" evidence="1">
    <location>
        <begin position="189"/>
        <end position="192"/>
    </location>
    <ligand>
        <name>NADP(+)</name>
        <dbReference type="ChEBI" id="CHEBI:58349"/>
    </ligand>
</feature>
<feature type="binding site" evidence="1">
    <location>
        <position position="207"/>
    </location>
    <ligand>
        <name>NADP(+)</name>
        <dbReference type="ChEBI" id="CHEBI:58349"/>
    </ligand>
</feature>
<feature type="binding site" evidence="1">
    <location>
        <begin position="254"/>
        <end position="255"/>
    </location>
    <ligand>
        <name>NADP(+)</name>
        <dbReference type="ChEBI" id="CHEBI:58349"/>
    </ligand>
</feature>
<feature type="binding site" evidence="2">
    <location>
        <begin position="274"/>
        <end position="278"/>
    </location>
    <ligand>
        <name>substrate</name>
    </ligand>
</feature>
<feature type="binding site" evidence="1">
    <location>
        <begin position="343"/>
        <end position="344"/>
    </location>
    <ligand>
        <name>NADP(+)</name>
        <dbReference type="ChEBI" id="CHEBI:58349"/>
    </ligand>
</feature>
<evidence type="ECO:0000250" key="1">
    <source>
        <dbReference type="UniProtKB" id="Q9Y7D0"/>
    </source>
</evidence>
<evidence type="ECO:0000255" key="2"/>
<evidence type="ECO:0000269" key="3">
    <source>
    </source>
</evidence>
<evidence type="ECO:0000269" key="4">
    <source>
    </source>
</evidence>
<evidence type="ECO:0000269" key="5">
    <source>
    </source>
</evidence>
<evidence type="ECO:0000303" key="6">
    <source>
    </source>
</evidence>
<evidence type="ECO:0000303" key="7">
    <source>
    </source>
</evidence>
<evidence type="ECO:0000305" key="8"/>
<evidence type="ECO:0000305" key="9">
    <source>
    </source>
</evidence>
<evidence type="ECO:0000305" key="10">
    <source>
    </source>
</evidence>
<proteinExistence type="evidence at transcript level"/>